<name>NOTC4_MOUSE</name>
<keyword id="KW-0010">Activator</keyword>
<keyword id="KW-0040">ANK repeat</keyword>
<keyword id="KW-1003">Cell membrane</keyword>
<keyword id="KW-0217">Developmental protein</keyword>
<keyword id="KW-0221">Differentiation</keyword>
<keyword id="KW-0903">Direct protein sequencing</keyword>
<keyword id="KW-1015">Disulfide bond</keyword>
<keyword id="KW-0245">EGF-like domain</keyword>
<keyword id="KW-0325">Glycoprotein</keyword>
<keyword id="KW-0472">Membrane</keyword>
<keyword id="KW-0914">Notch signaling pathway</keyword>
<keyword id="KW-0539">Nucleus</keyword>
<keyword id="KW-0597">Phosphoprotein</keyword>
<keyword id="KW-0656">Proto-oncogene</keyword>
<keyword id="KW-0675">Receptor</keyword>
<keyword id="KW-1185">Reference proteome</keyword>
<keyword id="KW-0677">Repeat</keyword>
<keyword id="KW-0732">Signal</keyword>
<keyword id="KW-0804">Transcription</keyword>
<keyword id="KW-0805">Transcription regulation</keyword>
<keyword id="KW-0812">Transmembrane</keyword>
<keyword id="KW-1133">Transmembrane helix</keyword>
<reference key="1">
    <citation type="journal article" date="1992" name="J. Virol.">
        <title>Mouse mammary tumor gene int-3: a member of the notch gene family transforms mammary epithelial cells.</title>
        <authorList>
            <person name="Robbins J."/>
            <person name="Blondel B.J."/>
            <person name="Gallahan D."/>
            <person name="Callahan R."/>
        </authorList>
    </citation>
    <scope>NUCLEOTIDE SEQUENCE [MRNA]</scope>
</reference>
<reference key="2">
    <citation type="journal article" date="1997" name="Oncogene">
        <title>The mouse mammary tumor associated gene INT3 is a unique member of the NOTCH gene family (NOTCH4).</title>
        <authorList>
            <person name="Gallahan D."/>
            <person name="Callahan R."/>
        </authorList>
    </citation>
    <scope>SEQUENCE REVISION</scope>
</reference>
<reference key="3">
    <citation type="journal article" date="1996" name="Development">
        <title>Notch4/int-3, a mammary proto-oncogene, is an endothelial cell-specific mammalian Notch gene.</title>
        <authorList>
            <person name="Uyttendaele H."/>
            <person name="Marazzi G."/>
            <person name="Wu G."/>
            <person name="Yan Q."/>
            <person name="Sassoon D."/>
            <person name="Kitajewski J."/>
        </authorList>
    </citation>
    <scope>NUCLEOTIDE SEQUENCE [MRNA]</scope>
    <scope>INVOLVEMENT IN MAMMARY CARCINOMA</scope>
    <source>
        <tissue>Lung</tissue>
        <tissue>Testis</tissue>
    </source>
</reference>
<reference key="4">
    <citation type="journal article" date="2003" name="Genome Res.">
        <title>Analysis of the gene-dense major histocompatibility complex class III region and its comparison to mouse.</title>
        <authorList>
            <person name="Xie T."/>
            <person name="Rowen L."/>
            <person name="Aguado B."/>
            <person name="Ahearn M.E."/>
            <person name="Madan A."/>
            <person name="Qin S."/>
            <person name="Campbell R.D."/>
            <person name="Hood L."/>
        </authorList>
    </citation>
    <scope>NUCLEOTIDE SEQUENCE [LARGE SCALE GENOMIC DNA]</scope>
    <source>
        <strain>129</strain>
    </source>
</reference>
<reference key="5">
    <citation type="journal article" date="2009" name="PLoS Biol.">
        <title>Lineage-specific biology revealed by a finished genome assembly of the mouse.</title>
        <authorList>
            <person name="Church D.M."/>
            <person name="Goodstadt L."/>
            <person name="Hillier L.W."/>
            <person name="Zody M.C."/>
            <person name="Goldstein S."/>
            <person name="She X."/>
            <person name="Bult C.J."/>
            <person name="Agarwala R."/>
            <person name="Cherry J.L."/>
            <person name="DiCuccio M."/>
            <person name="Hlavina W."/>
            <person name="Kapustin Y."/>
            <person name="Meric P."/>
            <person name="Maglott D."/>
            <person name="Birtle Z."/>
            <person name="Marques A.C."/>
            <person name="Graves T."/>
            <person name="Zhou S."/>
            <person name="Teague B."/>
            <person name="Potamousis K."/>
            <person name="Churas C."/>
            <person name="Place M."/>
            <person name="Herschleb J."/>
            <person name="Runnheim R."/>
            <person name="Forrest D."/>
            <person name="Amos-Landgraf J."/>
            <person name="Schwartz D.C."/>
            <person name="Cheng Z."/>
            <person name="Lindblad-Toh K."/>
            <person name="Eichler E.E."/>
            <person name="Ponting C.P."/>
        </authorList>
    </citation>
    <scope>NUCLEOTIDE SEQUENCE [LARGE SCALE GENOMIC DNA]</scope>
    <source>
        <strain>C57BL/6J</strain>
    </source>
</reference>
<reference key="6">
    <citation type="journal article" date="2001" name="J. Biol. Chem.">
        <title>Murine notch homologs (N1-4) undergo presenilin-dependent proteolysis.</title>
        <authorList>
            <person name="Saxena M.T."/>
            <person name="Schroeter E.H."/>
            <person name="Mumm J.S."/>
            <person name="Kopan R."/>
        </authorList>
    </citation>
    <scope>PROTEIN SEQUENCE OF 1463-1964</scope>
    <scope>PROTEOLYTIC PROCESSING</scope>
    <scope>MUTAGENESIS OF VAL-1463</scope>
</reference>
<reference key="7">
    <citation type="journal article" date="1999" name="J. Virol.">
        <title>Intracisternal type A particle-mediated activation of the Notch4/int3 gene in a mouse mammary tumor: generation of truncated Notch4/int3 mRNAs by retroviral splicing events.</title>
        <authorList>
            <person name="Lee J.-S."/>
            <person name="Haruna T."/>
            <person name="Ishimoto A."/>
            <person name="Honjo T."/>
            <person name="Yanagawa S."/>
        </authorList>
    </citation>
    <scope>NUCLEOTIDE SEQUENCE [GENOMIC DNA / MRNA] OF 1466-1600</scope>
</reference>
<reference key="8">
    <citation type="journal article" date="2001" name="Proc. Natl. Acad. Sci. U.S.A.">
        <title>Vascular patterning defects associated with expression of activated Notch4 in embryonic endothelium.</title>
        <authorList>
            <person name="Uyttendaele H."/>
            <person name="Ho J."/>
            <person name="Rossant J."/>
            <person name="Kitajewski J."/>
        </authorList>
    </citation>
    <scope>FUNCTION</scope>
</reference>
<reference key="9">
    <citation type="journal article" date="2001" name="Proc. Natl. Acad. Sci. U.S.A.">
        <title>Conservation of the biochemical mechanisms of signal transduction among mammalian Notch family members.</title>
        <authorList>
            <person name="Mizutani T."/>
            <person name="Taniguchi Y."/>
            <person name="Aoki T."/>
            <person name="Hashimoto N."/>
            <person name="Honjo T."/>
        </authorList>
    </citation>
    <scope>PROTEOLYTIC PROCESSING</scope>
</reference>
<reference key="10">
    <citation type="journal article" date="2004" name="Gene">
        <title>Cloning and functional characterization of the murine mastermind-like 1 (Maml1) gene.</title>
        <authorList>
            <person name="Wu L."/>
            <person name="Kobayashi K."/>
            <person name="Sun T."/>
            <person name="Gao P."/>
            <person name="Liu J."/>
            <person name="Nakamura M."/>
            <person name="Weisberg E."/>
            <person name="Mukhopadhyay N.K."/>
            <person name="Griffin J.D."/>
        </authorList>
    </citation>
    <scope>INTERACTION WITH MAML1</scope>
</reference>
<reference key="11">
    <citation type="journal article" date="2010" name="Cell">
        <title>A tissue-specific atlas of mouse protein phosphorylation and expression.</title>
        <authorList>
            <person name="Huttlin E.L."/>
            <person name="Jedrychowski M.P."/>
            <person name="Elias J.E."/>
            <person name="Goswami T."/>
            <person name="Rad R."/>
            <person name="Beausoleil S.A."/>
            <person name="Villen J."/>
            <person name="Haas W."/>
            <person name="Sowa M.E."/>
            <person name="Gygi S.P."/>
        </authorList>
    </citation>
    <scope>IDENTIFICATION BY MASS SPECTROMETRY [LARGE SCALE ANALYSIS]</scope>
    <source>
        <tissue>Lung</tissue>
    </source>
</reference>
<sequence>MQPQLLLLLLLPLNFPVILTRELLCGGSPEPCANGGTCLRLSRGQGICQCAPGFLGETCQFPDPCRDTQLCKNGGSCQALLPTPPSSRSPTSPLTPHFSCTCPSGFTGDRCQTHLEELCPPSFCSNGGHCYVQASGRPQCSCEPGWTGEQCQLRDFCSANPCANGGVCLATYPQIQCRCPPGFEGHTCERDINECFLEPGPCPQGTSCHNTLGSYQCLCPVGQEGPQCKLRKGACPPGSCLNGGTCQLVPEGHSTFHLCLCPPGFTGLDCEMNPDDCVRHQCQNGATCLDGLDTYTCLCPKTWKGWDCSEDIDECEARGPPRCRNGGTCQNTAGSFHCVCVSGWGGAGCEENLDDCAAATCAPGSTCIDRVGSFSCLCPPGRTGLLCHLEDMCLSQPCHVNAQCSTNPLTGSTLCICQPGYSGSTCHQDLDECQMAQQGPSPCEHGGSCINTPGSFNCLCLPGYTGSRCEADHNECLSQPCHPGSTCLDLLATFHCLCPPGLEGRLCEVEVNECTSNPCLNQAACHDLLNGFQCLCLPGFTGARCEKDMDECSSTPCANGGRCRDQPGAFYCECLPGFEGPHCEKEVDECLSDPCPVGASCLDLPGAFFCLCRPGFTGQLCEVPLCTPNMCQPGQQCQGQEHRAPCLCPDGSPGCVPAEDNCPCHHGHCQRSLCVCDEGWTGPECETELGGCISTPCAHGGTCHPQPSGYNCTCPAGYMGLTCSEEVTACHSGPCLNGGSCSIRPEGYSCTCLPSHTGRHCQTAVDHCVSASCLNGGTCVNKPGTFFCLCATGFQGLHCEEKTNPSCADSPCRNKATCQDTPRGARCLCSPGYTGSSCQTLIDLCARKPCPHTARCLQSGPSFQCLCLQGWTGALCDFPLSCQKAAMSQGIEISGLCQNGGLCIDTGSSYFCRCPPGFQGKLCQDNVNPCEPNPCHHGSTCVPQPSGYVCQCAPGYEGQNCSKVLDACQSQPCHNHGTCTSRPGGFHCACPPGFVGLRCEGDVDECLDRPCHPSGTAACHSLANAFYCQCLPGHTGQRCEVEMDLCQSQPCSNGGSCEITTGPPPGFTCHCPKGFEGPTCSHKALSCGIHHCHNGGLCLPSPKPGSPPLCACLSGFGGPDCLTPPAPPGCGPPSPCLHNGTCTETPGLGNPGFQCTCPPDSPGPRCQRPGASGCEGRGGDGTCDAGCSGPGGDWDGGDCSLGVPDPWKGCPPHSQCWLLFRDGRCHPQCDSEECLFDGYDCEIPLTCIPAYDQYCRDHFHNGHCEKGCNNAECGWDGGDCRPEGEDSEGRPSLALLVVLRPPALDQQLLALARVLSLTLRVGLWVRKDSEGRNMVFPYPGTRAKEELSGARDSSSWERQAPPTQPLGKETESLGAGFVVVMGVDLSRCGPEHPASRCPWDSGLLLRFLAAMAAVGALEPLLPGPLLAAHPQAGTRPSANQLPWPILCSPVVGVLLLALGALLVLQLIRRRRREHGALWLPPGFIRRPQTQQAPHRRRPPLGEDNIGLKALKPEAEVDEDGVAMCSGPEEGEAEETASASRCQLWPLNSGCGELPQAAMLTPPQECESEVLDVDTCGPDGVTPLMSAVFCGGVQSTTGASPQRLGLGNLEPWEPLLDRGACPQAHTVGTGETPLHLAARFSRPTAARRLLEAGANPNQPDRAGRTPLHTAVAADAREVCQLLLASRQTTVDARTEDGTTPLMLAARLAVEDLVEELIAARADVGARDKRGKTALHWAAAVNNARAARSLLQAGADKDAQDSREQTPLFLAAREGAVEVAQLLLELGAARGLRDQAGLAPGDVARQRSHWDLLTLLEGAGPTTQEARAHARTTPGGGAAPRCRTLSAGARPRGGGACLQARTWSVDLGARGGKVYARCRSRSGSCGGPTTRGRRFSAGSRGRRGARASQDDWPRDWVALEACGSACSAPIPPPSLTPSPERGSPQVAWGLPVHQEIPLNSVVRNLN</sequence>
<feature type="signal peptide" evidence="3">
    <location>
        <begin position="1"/>
        <end position="20"/>
    </location>
</feature>
<feature type="chain" id="PRO_0000007704" description="Neurogenic locus notch homolog protein 4">
    <location>
        <begin position="21"/>
        <end position="1964"/>
    </location>
</feature>
<feature type="chain" id="PRO_0000007705" description="Transforming protein Int-3">
    <location>
        <begin position="1411"/>
        <end position="1964"/>
    </location>
</feature>
<feature type="chain" id="PRO_0000007706" description="Notch 4 extracellular truncation">
    <location>
        <begin position="1428"/>
        <end position="1964"/>
    </location>
</feature>
<feature type="chain" id="PRO_0000007707" description="Notch 4 intracellular domain">
    <location>
        <begin position="1463"/>
        <end position="1964"/>
    </location>
</feature>
<feature type="topological domain" description="Extracellular" evidence="3">
    <location>
        <begin position="21"/>
        <end position="1443"/>
    </location>
</feature>
<feature type="transmembrane region" description="Helical" evidence="3">
    <location>
        <begin position="1444"/>
        <end position="1464"/>
    </location>
</feature>
<feature type="topological domain" description="Cytoplasmic" evidence="3">
    <location>
        <begin position="1465"/>
        <end position="1964"/>
    </location>
</feature>
<feature type="domain" description="EGF-like 1" evidence="4">
    <location>
        <begin position="21"/>
        <end position="60"/>
    </location>
</feature>
<feature type="domain" description="EGF-like 2" evidence="4">
    <location>
        <begin position="61"/>
        <end position="112"/>
    </location>
</feature>
<feature type="domain" description="EGF-like 3" evidence="4">
    <location>
        <begin position="115"/>
        <end position="152"/>
    </location>
</feature>
<feature type="domain" description="EGF-like 4" evidence="4">
    <location>
        <begin position="153"/>
        <end position="189"/>
    </location>
</feature>
<feature type="domain" description="EGF-like 5; calcium-binding" evidence="4">
    <location>
        <begin position="191"/>
        <end position="229"/>
    </location>
</feature>
<feature type="domain" description="EGF-like 6" evidence="4">
    <location>
        <begin position="231"/>
        <end position="271"/>
    </location>
</feature>
<feature type="domain" description="EGF-like 7; calcium-binding" evidence="4">
    <location>
        <begin position="273"/>
        <end position="309"/>
    </location>
</feature>
<feature type="domain" description="EGF-like 8; calcium-binding" evidence="4">
    <location>
        <begin position="311"/>
        <end position="350"/>
    </location>
</feature>
<feature type="domain" description="EGF-like 9; calcium-binding" evidence="4">
    <location>
        <begin position="352"/>
        <end position="388"/>
    </location>
</feature>
<feature type="domain" description="EGF-like 10" evidence="4">
    <location>
        <begin position="389"/>
        <end position="427"/>
    </location>
</feature>
<feature type="domain" description="EGF-like 11; calcium-binding" evidence="4">
    <location>
        <begin position="429"/>
        <end position="470"/>
    </location>
</feature>
<feature type="domain" description="EGF-like 12; calcium-binding" evidence="4">
    <location>
        <begin position="472"/>
        <end position="508"/>
    </location>
</feature>
<feature type="domain" description="EGF-like 13; calcium-binding" evidence="4">
    <location>
        <begin position="510"/>
        <end position="546"/>
    </location>
</feature>
<feature type="domain" description="EGF-like 14; calcium-binding" evidence="4">
    <location>
        <begin position="548"/>
        <end position="584"/>
    </location>
</feature>
<feature type="domain" description="EGF-like 15; calcium-binding" evidence="4">
    <location>
        <begin position="586"/>
        <end position="622"/>
    </location>
</feature>
<feature type="domain" description="EGF-like 16" evidence="4">
    <location>
        <begin position="623"/>
        <end position="656"/>
    </location>
</feature>
<feature type="domain" description="EGF-like 17" evidence="4">
    <location>
        <begin position="658"/>
        <end position="686"/>
    </location>
</feature>
<feature type="domain" description="EGF-like 18" evidence="4">
    <location>
        <begin position="688"/>
        <end position="724"/>
    </location>
</feature>
<feature type="domain" description="EGF-like 19" evidence="4">
    <location>
        <begin position="726"/>
        <end position="762"/>
    </location>
</feature>
<feature type="domain" description="EGF-like 20" evidence="4">
    <location>
        <begin position="764"/>
        <end position="800"/>
    </location>
</feature>
<feature type="domain" description="EGF-like 21" evidence="4">
    <location>
        <begin position="803"/>
        <end position="839"/>
    </location>
</feature>
<feature type="domain" description="EGF-like 22" evidence="4">
    <location>
        <begin position="841"/>
        <end position="877"/>
    </location>
</feature>
<feature type="domain" description="EGF-like 23" evidence="4">
    <location>
        <begin position="878"/>
        <end position="924"/>
    </location>
</feature>
<feature type="domain" description="EGF-like 24" evidence="4">
    <location>
        <begin position="926"/>
        <end position="962"/>
    </location>
</feature>
<feature type="domain" description="EGF-like 25" evidence="4">
    <location>
        <begin position="964"/>
        <end position="1000"/>
    </location>
</feature>
<feature type="domain" description="EGF-like 26" evidence="4">
    <location>
        <begin position="1002"/>
        <end position="1040"/>
    </location>
</feature>
<feature type="domain" description="EGF-like 27" evidence="4">
    <location>
        <begin position="1042"/>
        <end position="1081"/>
    </location>
</feature>
<feature type="domain" description="EGF-like 28" evidence="4">
    <location>
        <begin position="1083"/>
        <end position="1122"/>
    </location>
</feature>
<feature type="domain" description="EGF-like 29" evidence="4">
    <location>
        <begin position="1126"/>
        <end position="1167"/>
    </location>
</feature>
<feature type="repeat" description="LNR 1">
    <location>
        <begin position="1166"/>
        <end position="1209"/>
    </location>
</feature>
<feature type="repeat" description="LNR 2">
    <location>
        <begin position="1210"/>
        <end position="1241"/>
    </location>
</feature>
<feature type="repeat" description="LNR 3">
    <location>
        <begin position="1247"/>
        <end position="1287"/>
    </location>
</feature>
<feature type="repeat" description="ANK 1">
    <location>
        <begin position="1628"/>
        <end position="1657"/>
    </location>
</feature>
<feature type="repeat" description="ANK 2">
    <location>
        <begin position="1661"/>
        <end position="1691"/>
    </location>
</feature>
<feature type="repeat" description="ANK 3">
    <location>
        <begin position="1695"/>
        <end position="1724"/>
    </location>
</feature>
<feature type="repeat" description="ANK 4">
    <location>
        <begin position="1728"/>
        <end position="1757"/>
    </location>
</feature>
<feature type="repeat" description="ANK 5">
    <location>
        <begin position="1761"/>
        <end position="1790"/>
    </location>
</feature>
<feature type="region of interest" description="Disordered" evidence="5">
    <location>
        <begin position="1345"/>
        <end position="1369"/>
    </location>
</feature>
<feature type="region of interest" description="Disordered" evidence="5">
    <location>
        <begin position="1516"/>
        <end position="1535"/>
    </location>
</feature>
<feature type="region of interest" description="Disordered" evidence="5">
    <location>
        <begin position="1879"/>
        <end position="1907"/>
    </location>
</feature>
<feature type="glycosylation site" description="N-linked (GlcNAc...) asparagine" evidence="3">
    <location>
        <position position="711"/>
    </location>
</feature>
<feature type="glycosylation site" description="N-linked (GlcNAc...) asparagine" evidence="3">
    <location>
        <position position="960"/>
    </location>
</feature>
<feature type="glycosylation site" description="N-linked (GlcNAc...) asparagine" evidence="3">
    <location>
        <position position="1139"/>
    </location>
</feature>
<feature type="disulfide bond" evidence="1">
    <location>
        <begin position="25"/>
        <end position="38"/>
    </location>
</feature>
<feature type="disulfide bond" evidence="1">
    <location>
        <begin position="32"/>
        <end position="48"/>
    </location>
</feature>
<feature type="disulfide bond" evidence="1">
    <location>
        <begin position="50"/>
        <end position="59"/>
    </location>
</feature>
<feature type="disulfide bond" evidence="1">
    <location>
        <begin position="65"/>
        <end position="77"/>
    </location>
</feature>
<feature type="disulfide bond" evidence="1">
    <location>
        <begin position="71"/>
        <end position="100"/>
    </location>
</feature>
<feature type="disulfide bond" evidence="1">
    <location>
        <begin position="102"/>
        <end position="111"/>
    </location>
</feature>
<feature type="disulfide bond" evidence="1">
    <location>
        <begin position="119"/>
        <end position="130"/>
    </location>
</feature>
<feature type="disulfide bond" evidence="1">
    <location>
        <begin position="124"/>
        <end position="140"/>
    </location>
</feature>
<feature type="disulfide bond" evidence="1">
    <location>
        <begin position="142"/>
        <end position="151"/>
    </location>
</feature>
<feature type="disulfide bond" evidence="1">
    <location>
        <begin position="157"/>
        <end position="168"/>
    </location>
</feature>
<feature type="disulfide bond" evidence="1">
    <location>
        <begin position="162"/>
        <end position="177"/>
    </location>
</feature>
<feature type="disulfide bond" evidence="1">
    <location>
        <begin position="179"/>
        <end position="188"/>
    </location>
</feature>
<feature type="disulfide bond" evidence="1">
    <location>
        <begin position="195"/>
        <end position="208"/>
    </location>
</feature>
<feature type="disulfide bond" evidence="1">
    <location>
        <begin position="202"/>
        <end position="217"/>
    </location>
</feature>
<feature type="disulfide bond" evidence="1">
    <location>
        <begin position="219"/>
        <end position="228"/>
    </location>
</feature>
<feature type="disulfide bond" evidence="1">
    <location>
        <begin position="235"/>
        <end position="246"/>
    </location>
</feature>
<feature type="disulfide bond" evidence="1">
    <location>
        <begin position="240"/>
        <end position="259"/>
    </location>
</feature>
<feature type="disulfide bond" evidence="1">
    <location>
        <begin position="261"/>
        <end position="270"/>
    </location>
</feature>
<feature type="disulfide bond" evidence="1">
    <location>
        <begin position="277"/>
        <end position="288"/>
    </location>
</feature>
<feature type="disulfide bond" evidence="1">
    <location>
        <begin position="282"/>
        <end position="297"/>
    </location>
</feature>
<feature type="disulfide bond" evidence="1">
    <location>
        <begin position="299"/>
        <end position="308"/>
    </location>
</feature>
<feature type="disulfide bond" evidence="1">
    <location>
        <begin position="315"/>
        <end position="329"/>
    </location>
</feature>
<feature type="disulfide bond" evidence="1">
    <location>
        <begin position="323"/>
        <end position="338"/>
    </location>
</feature>
<feature type="disulfide bond" evidence="1">
    <location>
        <begin position="340"/>
        <end position="349"/>
    </location>
</feature>
<feature type="disulfide bond" evidence="1">
    <location>
        <begin position="356"/>
        <end position="367"/>
    </location>
</feature>
<feature type="disulfide bond" evidence="1">
    <location>
        <begin position="361"/>
        <end position="376"/>
    </location>
</feature>
<feature type="disulfide bond" evidence="1">
    <location>
        <begin position="378"/>
        <end position="387"/>
    </location>
</feature>
<feature type="disulfide bond" evidence="1">
    <location>
        <begin position="393"/>
        <end position="404"/>
    </location>
</feature>
<feature type="disulfide bond" evidence="1">
    <location>
        <begin position="398"/>
        <end position="415"/>
    </location>
</feature>
<feature type="disulfide bond" evidence="1">
    <location>
        <begin position="417"/>
        <end position="426"/>
    </location>
</feature>
<feature type="disulfide bond" evidence="1">
    <location>
        <begin position="433"/>
        <end position="449"/>
    </location>
</feature>
<feature type="disulfide bond" evidence="1">
    <location>
        <begin position="443"/>
        <end position="458"/>
    </location>
</feature>
<feature type="disulfide bond" evidence="1">
    <location>
        <begin position="460"/>
        <end position="469"/>
    </location>
</feature>
<feature type="disulfide bond" evidence="1">
    <location>
        <begin position="476"/>
        <end position="487"/>
    </location>
</feature>
<feature type="disulfide bond" evidence="1">
    <location>
        <begin position="481"/>
        <end position="496"/>
    </location>
</feature>
<feature type="disulfide bond" evidence="1">
    <location>
        <begin position="498"/>
        <end position="507"/>
    </location>
</feature>
<feature type="disulfide bond" evidence="1">
    <location>
        <begin position="514"/>
        <end position="525"/>
    </location>
</feature>
<feature type="disulfide bond" evidence="1">
    <location>
        <begin position="519"/>
        <end position="534"/>
    </location>
</feature>
<feature type="disulfide bond" evidence="1">
    <location>
        <begin position="536"/>
        <end position="545"/>
    </location>
</feature>
<feature type="disulfide bond" evidence="1">
    <location>
        <begin position="552"/>
        <end position="563"/>
    </location>
</feature>
<feature type="disulfide bond" evidence="1">
    <location>
        <begin position="557"/>
        <end position="572"/>
    </location>
</feature>
<feature type="disulfide bond" evidence="1">
    <location>
        <begin position="574"/>
        <end position="583"/>
    </location>
</feature>
<feature type="disulfide bond" evidence="1">
    <location>
        <begin position="590"/>
        <end position="601"/>
    </location>
</feature>
<feature type="disulfide bond" evidence="1">
    <location>
        <begin position="595"/>
        <end position="610"/>
    </location>
</feature>
<feature type="disulfide bond" evidence="1">
    <location>
        <begin position="612"/>
        <end position="621"/>
    </location>
</feature>
<feature type="disulfide bond" evidence="1">
    <location>
        <begin position="626"/>
        <end position="637"/>
    </location>
</feature>
<feature type="disulfide bond" evidence="1">
    <location>
        <begin position="631"/>
        <end position="646"/>
    </location>
</feature>
<feature type="disulfide bond" evidence="1">
    <location>
        <begin position="648"/>
        <end position="655"/>
    </location>
</feature>
<feature type="disulfide bond" evidence="1">
    <location>
        <begin position="662"/>
        <end position="669"/>
    </location>
</feature>
<feature type="disulfide bond" evidence="1">
    <location>
        <begin position="664"/>
        <end position="674"/>
    </location>
</feature>
<feature type="disulfide bond" evidence="1">
    <location>
        <begin position="676"/>
        <end position="685"/>
    </location>
</feature>
<feature type="disulfide bond" evidence="1">
    <location>
        <begin position="692"/>
        <end position="703"/>
    </location>
</feature>
<feature type="disulfide bond" evidence="1">
    <location>
        <begin position="697"/>
        <end position="712"/>
    </location>
</feature>
<feature type="disulfide bond" evidence="1">
    <location>
        <begin position="714"/>
        <end position="723"/>
    </location>
</feature>
<feature type="disulfide bond" evidence="1">
    <location>
        <begin position="730"/>
        <end position="741"/>
    </location>
</feature>
<feature type="disulfide bond" evidence="1">
    <location>
        <begin position="735"/>
        <end position="750"/>
    </location>
</feature>
<feature type="disulfide bond" evidence="1">
    <location>
        <begin position="752"/>
        <end position="761"/>
    </location>
</feature>
<feature type="disulfide bond" evidence="1">
    <location>
        <begin position="768"/>
        <end position="779"/>
    </location>
</feature>
<feature type="disulfide bond" evidence="1">
    <location>
        <begin position="773"/>
        <end position="788"/>
    </location>
</feature>
<feature type="disulfide bond" evidence="1">
    <location>
        <begin position="790"/>
        <end position="799"/>
    </location>
</feature>
<feature type="disulfide bond" evidence="1">
    <location>
        <begin position="807"/>
        <end position="818"/>
    </location>
</feature>
<feature type="disulfide bond" evidence="1">
    <location>
        <begin position="812"/>
        <end position="827"/>
    </location>
</feature>
<feature type="disulfide bond" evidence="1">
    <location>
        <begin position="829"/>
        <end position="838"/>
    </location>
</feature>
<feature type="disulfide bond" evidence="1">
    <location>
        <begin position="845"/>
        <end position="856"/>
    </location>
</feature>
<feature type="disulfide bond" evidence="1">
    <location>
        <begin position="850"/>
        <end position="865"/>
    </location>
</feature>
<feature type="disulfide bond" evidence="1">
    <location>
        <begin position="867"/>
        <end position="876"/>
    </location>
</feature>
<feature type="disulfide bond" evidence="1">
    <location>
        <begin position="882"/>
        <end position="903"/>
    </location>
</feature>
<feature type="disulfide bond" evidence="1">
    <location>
        <begin position="897"/>
        <end position="912"/>
    </location>
</feature>
<feature type="disulfide bond" evidence="1">
    <location>
        <begin position="914"/>
        <end position="923"/>
    </location>
</feature>
<feature type="disulfide bond" evidence="1">
    <location>
        <begin position="930"/>
        <end position="941"/>
    </location>
</feature>
<feature type="disulfide bond" evidence="1">
    <location>
        <begin position="935"/>
        <end position="950"/>
    </location>
</feature>
<feature type="disulfide bond" evidence="1">
    <location>
        <begin position="952"/>
        <end position="961"/>
    </location>
</feature>
<feature type="disulfide bond" evidence="1">
    <location>
        <begin position="968"/>
        <end position="979"/>
    </location>
</feature>
<feature type="disulfide bond" evidence="1">
    <location>
        <begin position="973"/>
        <end position="988"/>
    </location>
</feature>
<feature type="disulfide bond" evidence="1">
    <location>
        <begin position="990"/>
        <end position="999"/>
    </location>
</feature>
<feature type="disulfide bond" evidence="1">
    <location>
        <begin position="1006"/>
        <end position="1019"/>
    </location>
</feature>
<feature type="disulfide bond" evidence="1">
    <location>
        <begin position="1011"/>
        <end position="1028"/>
    </location>
</feature>
<feature type="disulfide bond" evidence="1">
    <location>
        <begin position="1030"/>
        <end position="1039"/>
    </location>
</feature>
<feature type="disulfide bond" evidence="1">
    <location>
        <begin position="1046"/>
        <end position="1057"/>
    </location>
</feature>
<feature type="disulfide bond" evidence="1">
    <location>
        <begin position="1051"/>
        <end position="1069"/>
    </location>
</feature>
<feature type="disulfide bond" evidence="1">
    <location>
        <begin position="1071"/>
        <end position="1080"/>
    </location>
</feature>
<feature type="disulfide bond" evidence="1">
    <location>
        <begin position="1087"/>
        <end position="1098"/>
    </location>
</feature>
<feature type="disulfide bond" evidence="1">
    <location>
        <begin position="1092"/>
        <end position="1110"/>
    </location>
</feature>
<feature type="disulfide bond" evidence="1">
    <location>
        <begin position="1112"/>
        <end position="1121"/>
    </location>
</feature>
<feature type="disulfide bond" evidence="1">
    <location>
        <begin position="1130"/>
        <end position="1142"/>
    </location>
</feature>
<feature type="disulfide bond" evidence="1">
    <location>
        <begin position="1136"/>
        <end position="1155"/>
    </location>
</feature>
<feature type="disulfide bond" evidence="1">
    <location>
        <begin position="1157"/>
        <end position="1166"/>
    </location>
</feature>
<feature type="disulfide bond" evidence="1">
    <location>
        <begin position="1174"/>
        <end position="1187"/>
    </location>
</feature>
<feature type="disulfide bond" evidence="1">
    <location>
        <begin position="1183"/>
        <end position="1199"/>
    </location>
</feature>
<feature type="disulfide bond" evidence="1">
    <location>
        <begin position="1210"/>
        <end position="1234"/>
    </location>
</feature>
<feature type="disulfide bond" evidence="1">
    <location>
        <begin position="1216"/>
        <end position="1229"/>
    </location>
</feature>
<feature type="disulfide bond" evidence="1">
    <location>
        <begin position="1225"/>
        <end position="1241"/>
    </location>
</feature>
<feature type="disulfide bond" evidence="1">
    <location>
        <begin position="1247"/>
        <end position="1273"/>
    </location>
</feature>
<feature type="disulfide bond" evidence="1">
    <location>
        <begin position="1255"/>
        <end position="1268"/>
    </location>
</feature>
<feature type="disulfide bond" evidence="1">
    <location>
        <begin position="1264"/>
        <end position="1280"/>
    </location>
</feature>
<feature type="mutagenesis site" description="NICD processing severely reduced." evidence="8">
    <original>V</original>
    <variation>L</variation>
    <location>
        <position position="1463"/>
    </location>
</feature>
<feature type="sequence conflict" description="In Ref. 1; AAB38377." evidence="11" ref="1">
    <original>R</original>
    <variation>Q</variation>
    <location>
        <position position="43"/>
    </location>
</feature>
<feature type="sequence conflict" description="In Ref. 3; AAC52630." evidence="11" ref="3">
    <original>L</original>
    <variation>P</variation>
    <location>
        <position position="298"/>
    </location>
</feature>
<feature type="sequence conflict" description="In Ref. 1; AAB38377." evidence="11" ref="1">
    <original>K</original>
    <variation>M</variation>
    <location>
        <position position="884"/>
    </location>
</feature>
<feature type="sequence conflict" description="In Ref. 1; AAB38377." evidence="11" ref="1">
    <original>V</original>
    <variation>M</variation>
    <location>
        <position position="927"/>
    </location>
</feature>
<feature type="sequence conflict" description="In Ref. 1; AAB38377." evidence="11" ref="1">
    <original>D</original>
    <variation>E</variation>
    <location>
        <position position="966"/>
    </location>
</feature>
<feature type="sequence conflict" description="In Ref. 3; AAC52630." evidence="11" ref="3">
    <original>L</original>
    <variation>P</variation>
    <location>
        <position position="1245"/>
    </location>
</feature>
<feature type="sequence conflict" description="In Ref. 3; AAC52631/AAC52630 and 1; AAB38377." evidence="11" ref="3 1">
    <original>S</original>
    <variation>P</variation>
    <location>
        <position position="1437"/>
    </location>
</feature>
<feature type="sequence conflict" description="In Ref. 7; BAA32283/BAA32284." evidence="11" ref="7">
    <original>R</original>
    <variation>Q</variation>
    <location>
        <position position="1469"/>
    </location>
</feature>
<feature type="sequence conflict" description="In Ref. 1; AAB38377." evidence="11" ref="1">
    <original>T</original>
    <variation>A</variation>
    <location>
        <position position="1489"/>
    </location>
</feature>
<feature type="sequence conflict" description="In Ref. 1; AAB38377." evidence="11" ref="1">
    <original>G</original>
    <variation>S</variation>
    <location>
        <position position="1549"/>
    </location>
</feature>
<feature type="sequence conflict" description="In Ref. 1; AAB38377." evidence="11" ref="1">
    <original>T</original>
    <variation>S</variation>
    <location>
        <position position="1688"/>
    </location>
</feature>
<feature type="sequence conflict" description="In Ref. 3; AAC52630/AAC52631." evidence="11" ref="3">
    <original>A</original>
    <variation>S</variation>
    <location>
        <position position="1836"/>
    </location>
</feature>
<feature type="sequence conflict" description="In Ref. 1; AAB38377." evidence="11" ref="1">
    <original>P</original>
    <variation>A</variation>
    <location>
        <position position="1838"/>
    </location>
</feature>
<dbReference type="EMBL" id="M80456">
    <property type="protein sequence ID" value="AAB38377.1"/>
    <property type="molecule type" value="mRNA"/>
</dbReference>
<dbReference type="EMBL" id="U43691">
    <property type="protein sequence ID" value="AAC52630.1"/>
    <property type="molecule type" value="mRNA"/>
</dbReference>
<dbReference type="EMBL" id="U43691">
    <property type="protein sequence ID" value="AAC52631.1"/>
    <property type="molecule type" value="mRNA"/>
</dbReference>
<dbReference type="EMBL" id="AF030001">
    <property type="protein sequence ID" value="AAB82004.1"/>
    <property type="molecule type" value="Genomic_DNA"/>
</dbReference>
<dbReference type="EMBL" id="CT009767">
    <property type="protein sequence ID" value="CAM18615.1"/>
    <property type="molecule type" value="Genomic_DNA"/>
</dbReference>
<dbReference type="EMBL" id="AB016771">
    <property type="protein sequence ID" value="BAA32281.1"/>
    <property type="status" value="ALT_SEQ"/>
    <property type="molecule type" value="Genomic_DNA"/>
</dbReference>
<dbReference type="EMBL" id="AB016772">
    <property type="protein sequence ID" value="BAA32283.1"/>
    <property type="status" value="ALT_INIT"/>
    <property type="molecule type" value="mRNA"/>
</dbReference>
<dbReference type="EMBL" id="AB016773">
    <property type="protein sequence ID" value="BAA32284.1"/>
    <property type="status" value="ALT_INIT"/>
    <property type="molecule type" value="mRNA"/>
</dbReference>
<dbReference type="EMBL" id="AB016774">
    <property type="protein sequence ID" value="BAA32285.1"/>
    <property type="status" value="ALT_INIT"/>
    <property type="molecule type" value="mRNA"/>
</dbReference>
<dbReference type="CCDS" id="CCDS28647.1"/>
<dbReference type="PIR" id="A38072">
    <property type="entry name" value="TVMVT3"/>
</dbReference>
<dbReference type="PIR" id="T09059">
    <property type="entry name" value="T09059"/>
</dbReference>
<dbReference type="RefSeq" id="NP_035059.2">
    <property type="nucleotide sequence ID" value="NM_010929.2"/>
</dbReference>
<dbReference type="SMR" id="P31695"/>
<dbReference type="BioGRID" id="201812">
    <property type="interactions" value="11"/>
</dbReference>
<dbReference type="CORUM" id="P31695"/>
<dbReference type="FunCoup" id="P31695">
    <property type="interactions" value="168"/>
</dbReference>
<dbReference type="IntAct" id="P31695">
    <property type="interactions" value="2"/>
</dbReference>
<dbReference type="STRING" id="10090.ENSMUSP00000015612"/>
<dbReference type="GlyCosmos" id="P31695">
    <property type="glycosylation" value="3 sites, No reported glycans"/>
</dbReference>
<dbReference type="GlyGen" id="P31695">
    <property type="glycosylation" value="6 sites"/>
</dbReference>
<dbReference type="iPTMnet" id="P31695"/>
<dbReference type="PhosphoSitePlus" id="P31695"/>
<dbReference type="jPOST" id="P31695"/>
<dbReference type="PaxDb" id="10090-ENSMUSP00000015612"/>
<dbReference type="ProteomicsDB" id="293706"/>
<dbReference type="ProteomicsDB" id="338653"/>
<dbReference type="DNASU" id="18132"/>
<dbReference type="Ensembl" id="ENSMUST00000015612.14">
    <property type="protein sequence ID" value="ENSMUSP00000015612.8"/>
    <property type="gene ID" value="ENSMUSG00000015468.15"/>
</dbReference>
<dbReference type="GeneID" id="18132"/>
<dbReference type="KEGG" id="mmu:18132"/>
<dbReference type="UCSC" id="uc008ccs.1">
    <property type="organism name" value="mouse"/>
</dbReference>
<dbReference type="AGR" id="MGI:107471"/>
<dbReference type="CTD" id="4855"/>
<dbReference type="MGI" id="MGI:107471">
    <property type="gene designation" value="Notch4"/>
</dbReference>
<dbReference type="VEuPathDB" id="HostDB:ENSMUSG00000015468"/>
<dbReference type="eggNOG" id="KOG1217">
    <property type="taxonomic scope" value="Eukaryota"/>
</dbReference>
<dbReference type="GeneTree" id="ENSGT00940000155030"/>
<dbReference type="HOGENOM" id="CLU_000576_0_0_1"/>
<dbReference type="InParanoid" id="P31695"/>
<dbReference type="OMA" id="ACPQVHT"/>
<dbReference type="OrthoDB" id="20872at2759"/>
<dbReference type="PhylomeDB" id="P31695"/>
<dbReference type="TreeFam" id="TF351641"/>
<dbReference type="Reactome" id="R-MMU-1912420">
    <property type="pathway name" value="Pre-NOTCH Processing in Golgi"/>
</dbReference>
<dbReference type="Reactome" id="R-MMU-350054">
    <property type="pathway name" value="Notch-HLH transcription pathway"/>
</dbReference>
<dbReference type="Reactome" id="R-MMU-9013700">
    <property type="pathway name" value="NOTCH4 Activation and Transmission of Signal to the Nucleus"/>
</dbReference>
<dbReference type="Reactome" id="R-MMU-9604323">
    <property type="pathway name" value="Negative regulation of NOTCH4 signaling"/>
</dbReference>
<dbReference type="BioGRID-ORCS" id="18132">
    <property type="hits" value="3 hits in 77 CRISPR screens"/>
</dbReference>
<dbReference type="ChiTaRS" id="Notch4">
    <property type="organism name" value="mouse"/>
</dbReference>
<dbReference type="PRO" id="PR:P31695"/>
<dbReference type="Proteomes" id="UP000000589">
    <property type="component" value="Chromosome 17"/>
</dbReference>
<dbReference type="RNAct" id="P31695">
    <property type="molecule type" value="protein"/>
</dbReference>
<dbReference type="Bgee" id="ENSMUSG00000015468">
    <property type="expression patterns" value="Expressed in external carotid artery and 156 other cell types or tissues"/>
</dbReference>
<dbReference type="ExpressionAtlas" id="P31695">
    <property type="expression patterns" value="baseline and differential"/>
</dbReference>
<dbReference type="GO" id="GO:0009986">
    <property type="term" value="C:cell surface"/>
    <property type="evidence" value="ECO:0000250"/>
    <property type="project" value="UniProtKB"/>
</dbReference>
<dbReference type="GO" id="GO:0031410">
    <property type="term" value="C:cytoplasmic vesicle"/>
    <property type="evidence" value="ECO:0000314"/>
    <property type="project" value="MGI"/>
</dbReference>
<dbReference type="GO" id="GO:0005829">
    <property type="term" value="C:cytosol"/>
    <property type="evidence" value="ECO:0000304"/>
    <property type="project" value="Reactome"/>
</dbReference>
<dbReference type="GO" id="GO:0005783">
    <property type="term" value="C:endoplasmic reticulum"/>
    <property type="evidence" value="ECO:0000314"/>
    <property type="project" value="MGI"/>
</dbReference>
<dbReference type="GO" id="GO:0005654">
    <property type="term" value="C:nucleoplasm"/>
    <property type="evidence" value="ECO:0000304"/>
    <property type="project" value="Reactome"/>
</dbReference>
<dbReference type="GO" id="GO:0005886">
    <property type="term" value="C:plasma membrane"/>
    <property type="evidence" value="ECO:0000304"/>
    <property type="project" value="Reactome"/>
</dbReference>
<dbReference type="GO" id="GO:0005509">
    <property type="term" value="F:calcium ion binding"/>
    <property type="evidence" value="ECO:0007669"/>
    <property type="project" value="InterPro"/>
</dbReference>
<dbReference type="GO" id="GO:0005112">
    <property type="term" value="F:Notch binding"/>
    <property type="evidence" value="ECO:0000353"/>
    <property type="project" value="MGI"/>
</dbReference>
<dbReference type="GO" id="GO:0038023">
    <property type="term" value="F:signaling receptor activity"/>
    <property type="evidence" value="ECO:0007669"/>
    <property type="project" value="InterPro"/>
</dbReference>
<dbReference type="GO" id="GO:0001569">
    <property type="term" value="P:branching involved in blood vessel morphogenesis"/>
    <property type="evidence" value="ECO:0000315"/>
    <property type="project" value="UniProtKB"/>
</dbReference>
<dbReference type="GO" id="GO:0030154">
    <property type="term" value="P:cell differentiation"/>
    <property type="evidence" value="ECO:0007669"/>
    <property type="project" value="UniProtKB-KW"/>
</dbReference>
<dbReference type="GO" id="GO:0001763">
    <property type="term" value="P:morphogenesis of a branching structure"/>
    <property type="evidence" value="ECO:0000315"/>
    <property type="project" value="UniProtKB"/>
</dbReference>
<dbReference type="GO" id="GO:0045602">
    <property type="term" value="P:negative regulation of endothelial cell differentiation"/>
    <property type="evidence" value="ECO:0000315"/>
    <property type="project" value="UniProtKB"/>
</dbReference>
<dbReference type="GO" id="GO:0045746">
    <property type="term" value="P:negative regulation of Notch signaling pathway"/>
    <property type="evidence" value="ECO:0000314"/>
    <property type="project" value="MGI"/>
</dbReference>
<dbReference type="GO" id="GO:0007219">
    <property type="term" value="P:Notch signaling pathway"/>
    <property type="evidence" value="ECO:0000304"/>
    <property type="project" value="UniProtKB"/>
</dbReference>
<dbReference type="GO" id="GO:0045766">
    <property type="term" value="P:positive regulation of angiogenesis"/>
    <property type="evidence" value="ECO:0000315"/>
    <property type="project" value="MGI"/>
</dbReference>
<dbReference type="GO" id="GO:1903849">
    <property type="term" value="P:positive regulation of aorta morphogenesis"/>
    <property type="evidence" value="ECO:0000315"/>
    <property type="project" value="MGI"/>
</dbReference>
<dbReference type="GO" id="GO:0006355">
    <property type="term" value="P:regulation of DNA-templated transcription"/>
    <property type="evidence" value="ECO:0007669"/>
    <property type="project" value="InterPro"/>
</dbReference>
<dbReference type="GO" id="GO:0008593">
    <property type="term" value="P:regulation of Notch signaling pathway"/>
    <property type="evidence" value="ECO:0000316"/>
    <property type="project" value="MGI"/>
</dbReference>
<dbReference type="GO" id="GO:0032880">
    <property type="term" value="P:regulation of protein localization"/>
    <property type="evidence" value="ECO:0000314"/>
    <property type="project" value="MGI"/>
</dbReference>
<dbReference type="GO" id="GO:0070613">
    <property type="term" value="P:regulation of protein processing"/>
    <property type="evidence" value="ECO:0000314"/>
    <property type="project" value="MGI"/>
</dbReference>
<dbReference type="GO" id="GO:0001944">
    <property type="term" value="P:vasculature development"/>
    <property type="evidence" value="ECO:0000315"/>
    <property type="project" value="UniProtKB"/>
</dbReference>
<dbReference type="GO" id="GO:0048845">
    <property type="term" value="P:venous blood vessel morphogenesis"/>
    <property type="evidence" value="ECO:0000315"/>
    <property type="project" value="MGI"/>
</dbReference>
<dbReference type="CDD" id="cd00054">
    <property type="entry name" value="EGF_CA"/>
    <property type="match status" value="17"/>
</dbReference>
<dbReference type="CDD" id="cd21705">
    <property type="entry name" value="JMTM_Notch4"/>
    <property type="match status" value="1"/>
</dbReference>
<dbReference type="FunFam" id="2.10.25.10:FF:000185">
    <property type="entry name" value="basement membrane-specific heparan sulfate proteoglycan core protein-like"/>
    <property type="match status" value="1"/>
</dbReference>
<dbReference type="FunFam" id="2.10.25.10:FF:000080">
    <property type="entry name" value="Neurogenic locus notch 1"/>
    <property type="match status" value="1"/>
</dbReference>
<dbReference type="FunFam" id="2.10.25.10:FF:000136">
    <property type="entry name" value="Neurogenic locus notch 1"/>
    <property type="match status" value="1"/>
</dbReference>
<dbReference type="FunFam" id="3.30.300.320:FF:000001">
    <property type="entry name" value="Neurogenic locus notch 1"/>
    <property type="match status" value="1"/>
</dbReference>
<dbReference type="FunFam" id="2.10.25.10:FF:000272">
    <property type="entry name" value="neurogenic locus notch homolog protein 3"/>
    <property type="match status" value="1"/>
</dbReference>
<dbReference type="FunFam" id="2.10.25.10:FF:000456">
    <property type="entry name" value="Neurogenic locus notch homolog protein 4"/>
    <property type="match status" value="1"/>
</dbReference>
<dbReference type="FunFam" id="1.25.40.20:FF:000152">
    <property type="entry name" value="neurogenic locus notch homolog protein 4"/>
    <property type="match status" value="1"/>
</dbReference>
<dbReference type="FunFam" id="2.10.25.10:FF:000327">
    <property type="entry name" value="neurogenic locus notch homolog protein 4"/>
    <property type="match status" value="2"/>
</dbReference>
<dbReference type="FunFam" id="3.30.70.3310:FF:000004">
    <property type="entry name" value="neurogenic locus notch homolog protein 4"/>
    <property type="match status" value="1"/>
</dbReference>
<dbReference type="FunFam" id="2.10.25.10:FF:000651">
    <property type="entry name" value="neurogenic locus notch homolog protein 4 isoform X1"/>
    <property type="match status" value="1"/>
</dbReference>
<dbReference type="FunFam" id="2.10.25.10:FF:000060">
    <property type="entry name" value="Neurogenic locus notch protein 1"/>
    <property type="match status" value="1"/>
</dbReference>
<dbReference type="FunFam" id="2.10.25.10:FF:000092">
    <property type="entry name" value="Neurogenic locus notch protein 1"/>
    <property type="match status" value="1"/>
</dbReference>
<dbReference type="FunFam" id="2.10.25.10:FF:000125">
    <property type="entry name" value="Neurogenic locus notch protein-like"/>
    <property type="match status" value="1"/>
</dbReference>
<dbReference type="FunFam" id="2.10.25.10:FF:000109">
    <property type="entry name" value="Notch homolog 4, [Drosophila]"/>
    <property type="match status" value="5"/>
</dbReference>
<dbReference type="FunFam" id="2.10.25.10:FF:000479">
    <property type="entry name" value="Notch homolog 4, [Drosophila]"/>
    <property type="match status" value="1"/>
</dbReference>
<dbReference type="FunFam" id="2.10.25.10:FF:000541">
    <property type="entry name" value="Notch homolog 4, [Drosophila]"/>
    <property type="match status" value="1"/>
</dbReference>
<dbReference type="FunFam" id="2.10.25.10:FF:000570">
    <property type="entry name" value="Notch homolog 4, [Drosophila]"/>
    <property type="match status" value="1"/>
</dbReference>
<dbReference type="FunFam" id="2.10.25.10:FF:000588">
    <property type="entry name" value="Notch homolog 4, [Drosophila]"/>
    <property type="match status" value="1"/>
</dbReference>
<dbReference type="FunFam" id="2.10.25.10:FF:000260">
    <property type="entry name" value="Notch receptor 4"/>
    <property type="match status" value="1"/>
</dbReference>
<dbReference type="FunFam" id="2.10.25.10:FF:000054">
    <property type="entry name" value="Slit guidance ligand 2"/>
    <property type="match status" value="1"/>
</dbReference>
<dbReference type="Gene3D" id="3.30.300.320">
    <property type="match status" value="1"/>
</dbReference>
<dbReference type="Gene3D" id="3.30.70.3310">
    <property type="match status" value="1"/>
</dbReference>
<dbReference type="Gene3D" id="1.25.40.20">
    <property type="entry name" value="Ankyrin repeat-containing domain"/>
    <property type="match status" value="1"/>
</dbReference>
<dbReference type="Gene3D" id="2.10.25.10">
    <property type="entry name" value="Laminin"/>
    <property type="match status" value="26"/>
</dbReference>
<dbReference type="InterPro" id="IPR002110">
    <property type="entry name" value="Ankyrin_rpt"/>
</dbReference>
<dbReference type="InterPro" id="IPR036770">
    <property type="entry name" value="Ankyrin_rpt-contain_sf"/>
</dbReference>
<dbReference type="InterPro" id="IPR001881">
    <property type="entry name" value="EGF-like_Ca-bd_dom"/>
</dbReference>
<dbReference type="InterPro" id="IPR013032">
    <property type="entry name" value="EGF-like_CS"/>
</dbReference>
<dbReference type="InterPro" id="IPR000742">
    <property type="entry name" value="EGF-like_dom"/>
</dbReference>
<dbReference type="InterPro" id="IPR000152">
    <property type="entry name" value="EGF-type_Asp/Asn_hydroxyl_site"/>
</dbReference>
<dbReference type="InterPro" id="IPR018097">
    <property type="entry name" value="EGF_Ca-bd_CS"/>
</dbReference>
<dbReference type="InterPro" id="IPR009030">
    <property type="entry name" value="Growth_fac_rcpt_cys_sf"/>
</dbReference>
<dbReference type="InterPro" id="IPR008297">
    <property type="entry name" value="Notch"/>
</dbReference>
<dbReference type="InterPro" id="IPR035993">
    <property type="entry name" value="Notch-like_dom_sf"/>
</dbReference>
<dbReference type="InterPro" id="IPR051355">
    <property type="entry name" value="Notch/Slit_guidance"/>
</dbReference>
<dbReference type="InterPro" id="IPR049883">
    <property type="entry name" value="NOTCH1_EGF-like"/>
</dbReference>
<dbReference type="InterPro" id="IPR022355">
    <property type="entry name" value="Notch_4"/>
</dbReference>
<dbReference type="InterPro" id="IPR000800">
    <property type="entry name" value="Notch_dom"/>
</dbReference>
<dbReference type="InterPro" id="IPR010660">
    <property type="entry name" value="Notch_NOD_dom"/>
</dbReference>
<dbReference type="InterPro" id="IPR011656">
    <property type="entry name" value="Notch_NODP_dom"/>
</dbReference>
<dbReference type="PANTHER" id="PTHR45836:SF23">
    <property type="entry name" value="NEUROGENIC LOCUS NOTCH HOMOLOG PROTEIN 1"/>
    <property type="match status" value="1"/>
</dbReference>
<dbReference type="PANTHER" id="PTHR45836">
    <property type="entry name" value="SLIT HOMOLOG"/>
    <property type="match status" value="1"/>
</dbReference>
<dbReference type="Pfam" id="PF12796">
    <property type="entry name" value="Ank_2"/>
    <property type="match status" value="2"/>
</dbReference>
<dbReference type="Pfam" id="PF00008">
    <property type="entry name" value="EGF"/>
    <property type="match status" value="13"/>
</dbReference>
<dbReference type="Pfam" id="PF07645">
    <property type="entry name" value="EGF_CA"/>
    <property type="match status" value="3"/>
</dbReference>
<dbReference type="Pfam" id="PF12661">
    <property type="entry name" value="hEGF"/>
    <property type="match status" value="5"/>
</dbReference>
<dbReference type="Pfam" id="PF06816">
    <property type="entry name" value="NOD"/>
    <property type="match status" value="1"/>
</dbReference>
<dbReference type="Pfam" id="PF07684">
    <property type="entry name" value="NODP"/>
    <property type="match status" value="1"/>
</dbReference>
<dbReference type="Pfam" id="PF00066">
    <property type="entry name" value="Notch"/>
    <property type="match status" value="3"/>
</dbReference>
<dbReference type="PIRSF" id="PIRSF002279">
    <property type="entry name" value="Notch"/>
    <property type="match status" value="1"/>
</dbReference>
<dbReference type="PRINTS" id="PR00010">
    <property type="entry name" value="EGFBLOOD"/>
</dbReference>
<dbReference type="PRINTS" id="PR01452">
    <property type="entry name" value="LNOTCHREPEAT"/>
</dbReference>
<dbReference type="PRINTS" id="PR01983">
    <property type="entry name" value="NOTCH"/>
</dbReference>
<dbReference type="PRINTS" id="PR01987">
    <property type="entry name" value="NOTCH4"/>
</dbReference>
<dbReference type="SMART" id="SM00248">
    <property type="entry name" value="ANK"/>
    <property type="match status" value="6"/>
</dbReference>
<dbReference type="SMART" id="SM00181">
    <property type="entry name" value="EGF"/>
    <property type="match status" value="28"/>
</dbReference>
<dbReference type="SMART" id="SM00179">
    <property type="entry name" value="EGF_CA"/>
    <property type="match status" value="21"/>
</dbReference>
<dbReference type="SMART" id="SM00004">
    <property type="entry name" value="NL"/>
    <property type="match status" value="3"/>
</dbReference>
<dbReference type="SMART" id="SM01338">
    <property type="entry name" value="NOD"/>
    <property type="match status" value="1"/>
</dbReference>
<dbReference type="SMART" id="SM01339">
    <property type="entry name" value="NODP"/>
    <property type="match status" value="1"/>
</dbReference>
<dbReference type="SUPFAM" id="SSF48403">
    <property type="entry name" value="Ankyrin repeat"/>
    <property type="match status" value="1"/>
</dbReference>
<dbReference type="SUPFAM" id="SSF57196">
    <property type="entry name" value="EGF/Laminin"/>
    <property type="match status" value="11"/>
</dbReference>
<dbReference type="SUPFAM" id="SSF57184">
    <property type="entry name" value="Growth factor receptor domain"/>
    <property type="match status" value="5"/>
</dbReference>
<dbReference type="SUPFAM" id="SSF90193">
    <property type="entry name" value="Notch domain"/>
    <property type="match status" value="2"/>
</dbReference>
<dbReference type="PROSITE" id="PS50297">
    <property type="entry name" value="ANK_REP_REGION"/>
    <property type="match status" value="1"/>
</dbReference>
<dbReference type="PROSITE" id="PS50088">
    <property type="entry name" value="ANK_REPEAT"/>
    <property type="match status" value="5"/>
</dbReference>
<dbReference type="PROSITE" id="PS00010">
    <property type="entry name" value="ASX_HYDROXYL"/>
    <property type="match status" value="11"/>
</dbReference>
<dbReference type="PROSITE" id="PS00022">
    <property type="entry name" value="EGF_1"/>
    <property type="match status" value="28"/>
</dbReference>
<dbReference type="PROSITE" id="PS01186">
    <property type="entry name" value="EGF_2"/>
    <property type="match status" value="21"/>
</dbReference>
<dbReference type="PROSITE" id="PS50026">
    <property type="entry name" value="EGF_3"/>
    <property type="match status" value="27"/>
</dbReference>
<dbReference type="PROSITE" id="PS01187">
    <property type="entry name" value="EGF_CA"/>
    <property type="match status" value="9"/>
</dbReference>
<dbReference type="PROSITE" id="PS50258">
    <property type="entry name" value="LNR"/>
    <property type="match status" value="3"/>
</dbReference>
<organism>
    <name type="scientific">Mus musculus</name>
    <name type="common">Mouse</name>
    <dbReference type="NCBI Taxonomy" id="10090"/>
    <lineage>
        <taxon>Eukaryota</taxon>
        <taxon>Metazoa</taxon>
        <taxon>Chordata</taxon>
        <taxon>Craniata</taxon>
        <taxon>Vertebrata</taxon>
        <taxon>Euteleostomi</taxon>
        <taxon>Mammalia</taxon>
        <taxon>Eutheria</taxon>
        <taxon>Euarchontoglires</taxon>
        <taxon>Glires</taxon>
        <taxon>Rodentia</taxon>
        <taxon>Myomorpha</taxon>
        <taxon>Muroidea</taxon>
        <taxon>Muridae</taxon>
        <taxon>Murinae</taxon>
        <taxon>Mus</taxon>
        <taxon>Mus</taxon>
    </lineage>
</organism>
<evidence type="ECO:0000250" key="1"/>
<evidence type="ECO:0000250" key="2">
    <source>
        <dbReference type="UniProtKB" id="Q99466"/>
    </source>
</evidence>
<evidence type="ECO:0000255" key="3"/>
<evidence type="ECO:0000255" key="4">
    <source>
        <dbReference type="PROSITE-ProRule" id="PRU00076"/>
    </source>
</evidence>
<evidence type="ECO:0000256" key="5">
    <source>
        <dbReference type="SAM" id="MobiDB-lite"/>
    </source>
</evidence>
<evidence type="ECO:0000269" key="6">
    <source>
    </source>
</evidence>
<evidence type="ECO:0000269" key="7">
    <source>
    </source>
</evidence>
<evidence type="ECO:0000269" key="8">
    <source>
    </source>
</evidence>
<evidence type="ECO:0000269" key="9">
    <source>
    </source>
</evidence>
<evidence type="ECO:0000303" key="10">
    <source>
    </source>
</evidence>
<evidence type="ECO:0000305" key="11"/>
<evidence type="ECO:0000312" key="12">
    <source>
        <dbReference type="MGI" id="MGI:107471"/>
    </source>
</evidence>
<protein>
    <recommendedName>
        <fullName evidence="2">Neurogenic locus notch homolog protein 4</fullName>
        <shortName>Notch 4</shortName>
    </recommendedName>
    <component>
        <recommendedName>
            <fullName>Transforming protein Int-3</fullName>
        </recommendedName>
    </component>
    <component>
        <recommendedName>
            <fullName>Notch 4 extracellular truncation</fullName>
        </recommendedName>
    </component>
    <component>
        <recommendedName>
            <fullName>Notch 4 intracellular domain</fullName>
        </recommendedName>
    </component>
</protein>
<gene>
    <name evidence="12" type="primary">Notch4</name>
    <name type="synonym">Int-3</name>
    <name type="synonym">Int3</name>
</gene>
<accession>P31695</accession>
<accession>A2CG28</accession>
<accession>O35442</accession>
<accession>O88314</accession>
<accession>O88316</accession>
<accession>Q62389</accession>
<accession>Q62390</accession>
<accession>Q9R1W9</accession>
<accession>Q9R1X0</accession>
<comment type="function">
    <text evidence="1 6">Functions as a receptor for membrane-bound ligands Jagged1, Jagged2 and Delta1 to regulate cell-fate determination. Upon ligand activation through the released notch intracellular domain (NICD) it forms a transcriptional activator complex with RBPJ/RBPSUH and activates genes of the enhancer of split locus. Affects the implementation of differentiation, proliferation and apoptotic programs (By similarity). May regulate branching morphogenesis in the developing vascular system.</text>
</comment>
<comment type="subunit">
    <text evidence="9">Heterodimer of a C-terminal fragment N(TM) and a N-terminal fragment N(EC) which are probably linked by disulfide bonds. Interacts with MAML1, MAML2 and MAML3 which act as transcriptional coactivators for NOTCH4.</text>
</comment>
<comment type="interaction">
    <interactant intactId="EBI-643670">
        <id>P31695</id>
    </interactant>
    <interactant intactId="EBI-323098">
        <id>Q93794</id>
        <label>sel-10</label>
    </interactant>
    <organismsDiffer>true</organismsDiffer>
    <experiments>2</experiments>
</comment>
<comment type="subcellular location">
    <subcellularLocation>
        <location>Cell membrane</location>
        <topology>Single-pass type I membrane protein</topology>
    </subcellularLocation>
</comment>
<comment type="subcellular location">
    <molecule>Notch 4 intracellular domain</molecule>
    <subcellularLocation>
        <location>Nucleus</location>
    </subcellularLocation>
    <text>Following proteolytical processing NICD is translocated to the nucleus.</text>
</comment>
<comment type="tissue specificity">
    <text>Highly expressed in lung, moderately in heart kidney, and at lower levels in the ovary and skeletal muscle. A very low expression is seen in the brain, intestine, liver and testis.</text>
</comment>
<comment type="developmental stage">
    <text>Highly expressed in endothelial cells during embryonic development from 9.0 dpc.</text>
</comment>
<comment type="PTM">
    <text evidence="7 8">Synthesized in the endoplasmic reticulum as an inactive form which is proteolytically cleaved by a furin-like convertase in the trans-Golgi network before it reaches the plasma membrane to yield an active, ligand-accessible form. Cleavage results in a C-terminal fragment N(TM) and a N-terminal fragment N(EC). Following ligand binding, it is cleaved by TNF-alpha converting enzyme (TACE) to yield a membrane-associated intermediate fragment called notch extracellular truncation (NEXT). This fragment is then cleaved by presenilin dependent gamma-secretase to release a notch-derived peptide containing the intracellular domain (NICD) from the membrane.</text>
</comment>
<comment type="PTM">
    <text>Phosphorylated.</text>
</comment>
<comment type="disease">
    <text evidence="10">Loss of the extracellular domain causes constitutive activation of the Notch protein, which leads to hyperproliferation of glandular epithelial tissues and development of mammary carcinomas.</text>
</comment>
<comment type="similarity">
    <text evidence="11">Belongs to the NOTCH family.</text>
</comment>
<comment type="sequence caution" evidence="11">
    <conflict type="miscellaneous discrepancy">
        <sequence resource="EMBL-CDS" id="BAA32281"/>
    </conflict>
    <text>Contaminating sequence. Sequence of unknown origin.</text>
</comment>
<comment type="sequence caution" evidence="11">
    <conflict type="erroneous initiation">
        <sequence resource="EMBL-CDS" id="BAA32283"/>
    </conflict>
    <text>Extended N-terminus.</text>
</comment>
<comment type="sequence caution" evidence="11">
    <conflict type="erroneous initiation">
        <sequence resource="EMBL-CDS" id="BAA32284"/>
    </conflict>
    <text>Extended N-terminus.</text>
</comment>
<comment type="sequence caution" evidence="11">
    <conflict type="erroneous initiation">
        <sequence resource="EMBL-CDS" id="BAA32285"/>
    </conflict>
    <text>Truncated N-terminus.</text>
</comment>
<proteinExistence type="evidence at protein level"/>